<sequence>LRLLLTTSVLRLARAANPFVAQQTPPDPCYDESGAPRRCIPEFVNAAFGKEVQASSTCGKPPTRHCDASDPRRAHPPAYLTDLNTAANMTCWRSETLHHLPHNVTLTLSLGKKFEVVYVSLQFCSPRPESTAIFKSMDYGKTWVPYQYYSSQCRKIYGKPSKATVTKQNEQEALCTDGLTDLYPLTGGLIAFSTLDGRPSAQDFDSSPVLQDWVTATDIRVVFSRPHLFRELGGREAGEEDGGAGATPYYYSVGELQVGGRCKCNGHASRCVKDKEQKLVCDCKHNTEGPECDRCKPFHYDRPWQRASAREANECLACNCNLHARRCRFNMELYKLSGRKSGGVCLNCRHNTAGRHCHYCKEGFYRDLSKSITDRKACKACDCHPVGAAGKTCNQTTGQCPCKDGVTGLTCNRCAKGFQQSRSPVAPCIKIPAINPTSLVTSTEAPADCDSYCKPAKGNYKINMKKYCKKDYVVQVNILEMETVANWAKFTINILSVYKCRDERVKRGDNFLWIHLKDLSCKCPKIQISKKYLVMGISENSTDRPGLMADKNSLVIQWRDAWTRRLRKLQRREKKGKCVKP</sequence>
<feature type="signal peptide" evidence="2">
    <location>
        <begin position="1" status="less than"/>
        <end position="15"/>
    </location>
</feature>
<feature type="chain" id="PRO_0000017087" description="Netrin-3">
    <location>
        <begin position="16"/>
        <end position="581"/>
    </location>
</feature>
<feature type="domain" description="Laminin N-terminal" evidence="5">
    <location>
        <begin position="35"/>
        <end position="261"/>
    </location>
</feature>
<feature type="domain" description="Laminin EGF-like 1" evidence="4">
    <location>
        <begin position="262"/>
        <end position="317"/>
    </location>
</feature>
<feature type="domain" description="Laminin EGF-like 2" evidence="4">
    <location>
        <begin position="318"/>
        <end position="380"/>
    </location>
</feature>
<feature type="domain" description="Laminin EGF-like 3" evidence="4">
    <location>
        <begin position="381"/>
        <end position="430"/>
    </location>
</feature>
<feature type="domain" description="NTR" evidence="3">
    <location>
        <begin position="449"/>
        <end position="578"/>
    </location>
</feature>
<feature type="short sequence motif" description="Cell attachment site" evidence="2">
    <location>
        <begin position="507"/>
        <end position="509"/>
    </location>
</feature>
<feature type="glycosylation site" description="N-linked (GlcNAc...) asparagine" evidence="2">
    <location>
        <position position="88"/>
    </location>
</feature>
<feature type="glycosylation site" description="N-linked (GlcNAc...) asparagine" evidence="2">
    <location>
        <position position="103"/>
    </location>
</feature>
<feature type="glycosylation site" description="N-linked (GlcNAc...) asparagine" evidence="2">
    <location>
        <position position="394"/>
    </location>
</feature>
<feature type="glycosylation site" description="N-linked (GlcNAc...) asparagine" evidence="2">
    <location>
        <position position="540"/>
    </location>
</feature>
<feature type="disulfide bond" evidence="1">
    <location>
        <begin position="91"/>
        <end position="124"/>
    </location>
</feature>
<feature type="disulfide bond" evidence="1">
    <location>
        <begin position="262"/>
        <end position="271"/>
    </location>
</feature>
<feature type="disulfide bond" evidence="1">
    <location>
        <begin position="264"/>
        <end position="281"/>
    </location>
</feature>
<feature type="disulfide bond" evidence="1">
    <location>
        <begin position="283"/>
        <end position="292"/>
    </location>
</feature>
<feature type="disulfide bond" evidence="1">
    <location>
        <begin position="295"/>
        <end position="315"/>
    </location>
</feature>
<feature type="disulfide bond" evidence="1">
    <location>
        <begin position="318"/>
        <end position="327"/>
    </location>
</feature>
<feature type="disulfide bond" evidence="1">
    <location>
        <begin position="320"/>
        <end position="345"/>
    </location>
</feature>
<feature type="disulfide bond" evidence="1">
    <location>
        <begin position="348"/>
        <end position="357"/>
    </location>
</feature>
<feature type="disulfide bond" evidence="1">
    <location>
        <begin position="360"/>
        <end position="378"/>
    </location>
</feature>
<feature type="disulfide bond" evidence="1">
    <location>
        <begin position="381"/>
        <end position="393"/>
    </location>
</feature>
<feature type="disulfide bond" evidence="1">
    <location>
        <begin position="383"/>
        <end position="400"/>
    </location>
</feature>
<feature type="disulfide bond" evidence="1">
    <location>
        <begin position="402"/>
        <end position="411"/>
    </location>
</feature>
<feature type="disulfide bond" evidence="1">
    <location>
        <begin position="414"/>
        <end position="428"/>
    </location>
</feature>
<feature type="disulfide bond" evidence="1">
    <location>
        <begin position="449"/>
        <end position="521"/>
    </location>
</feature>
<feature type="disulfide bond" evidence="1">
    <location>
        <begin position="468"/>
        <end position="578"/>
    </location>
</feature>
<feature type="non-terminal residue">
    <location>
        <position position="1"/>
    </location>
</feature>
<evidence type="ECO:0000250" key="1"/>
<evidence type="ECO:0000255" key="2"/>
<evidence type="ECO:0000255" key="3">
    <source>
        <dbReference type="PROSITE-ProRule" id="PRU00295"/>
    </source>
</evidence>
<evidence type="ECO:0000255" key="4">
    <source>
        <dbReference type="PROSITE-ProRule" id="PRU00460"/>
    </source>
</evidence>
<evidence type="ECO:0000255" key="5">
    <source>
        <dbReference type="PROSITE-ProRule" id="PRU00466"/>
    </source>
</evidence>
<proteinExistence type="evidence at transcript level"/>
<protein>
    <recommendedName>
        <fullName>Netrin-3</fullName>
    </recommendedName>
    <alternativeName>
        <fullName>Netrin-2</fullName>
    </alternativeName>
</protein>
<name>NET3_CHICK</name>
<reference key="1">
    <citation type="journal article" date="1994" name="Cell">
        <title>The netrins define a family of axon outgrowth-promoting proteins homologous to C. elegans UNC-6.</title>
        <authorList>
            <person name="Serafini T."/>
            <person name="Kennedy T.E."/>
            <person name="Galko M.J."/>
            <person name="Mirzayan C."/>
            <person name="Jessell T.M."/>
            <person name="Tessier-Lavigne M."/>
        </authorList>
    </citation>
    <scope>NUCLEOTIDE SEQUENCE [MRNA]</scope>
    <source>
        <strain>White leghorn</strain>
        <tissue>Embryonic brain</tissue>
    </source>
</reference>
<accession>Q90923</accession>
<keyword id="KW-1015">Disulfide bond</keyword>
<keyword id="KW-0272">Extracellular matrix</keyword>
<keyword id="KW-0325">Glycoprotein</keyword>
<keyword id="KW-0424">Laminin EGF-like domain</keyword>
<keyword id="KW-1185">Reference proteome</keyword>
<keyword id="KW-0677">Repeat</keyword>
<keyword id="KW-0964">Secreted</keyword>
<keyword id="KW-0732">Signal</keyword>
<comment type="function">
    <text>Netrins control guidance of CNS commissural axons and peripheral motor axons.</text>
</comment>
<comment type="subcellular location">
    <subcellularLocation>
        <location>Secreted</location>
        <location>Extracellular space</location>
        <location>Extracellular matrix</location>
    </subcellularLocation>
</comment>
<dbReference type="EMBL" id="L34550">
    <property type="protein sequence ID" value="AAA61743.1"/>
    <property type="molecule type" value="mRNA"/>
</dbReference>
<dbReference type="PIR" id="B54665">
    <property type="entry name" value="B54665"/>
</dbReference>
<dbReference type="RefSeq" id="NP_001264534.1">
    <property type="nucleotide sequence ID" value="NM_001277605.1"/>
</dbReference>
<dbReference type="SMR" id="Q90923"/>
<dbReference type="FunCoup" id="Q90923">
    <property type="interactions" value="3"/>
</dbReference>
<dbReference type="STRING" id="9031.ENSGALP00000071198"/>
<dbReference type="GlyCosmos" id="Q90923">
    <property type="glycosylation" value="4 sites, No reported glycans"/>
</dbReference>
<dbReference type="GlyGen" id="Q90923">
    <property type="glycosylation" value="4 sites"/>
</dbReference>
<dbReference type="PaxDb" id="9031-ENSGALP00000043056"/>
<dbReference type="KEGG" id="gga:396387"/>
<dbReference type="VEuPathDB" id="HostDB:geneid_396387"/>
<dbReference type="eggNOG" id="KOG3512">
    <property type="taxonomic scope" value="Eukaryota"/>
</dbReference>
<dbReference type="InParanoid" id="Q90923"/>
<dbReference type="OrthoDB" id="9972745at2759"/>
<dbReference type="PhylomeDB" id="Q90923"/>
<dbReference type="Proteomes" id="UP000000539">
    <property type="component" value="Unassembled WGS sequence"/>
</dbReference>
<dbReference type="GO" id="GO:0005604">
    <property type="term" value="C:basement membrane"/>
    <property type="evidence" value="ECO:0000318"/>
    <property type="project" value="GO_Central"/>
</dbReference>
<dbReference type="GO" id="GO:0005576">
    <property type="term" value="C:extracellular region"/>
    <property type="evidence" value="ECO:0007669"/>
    <property type="project" value="UniProtKB-KW"/>
</dbReference>
<dbReference type="GO" id="GO:0009887">
    <property type="term" value="P:animal organ morphogenesis"/>
    <property type="evidence" value="ECO:0000318"/>
    <property type="project" value="GO_Central"/>
</dbReference>
<dbReference type="GO" id="GO:0016358">
    <property type="term" value="P:dendrite development"/>
    <property type="evidence" value="ECO:0000318"/>
    <property type="project" value="GO_Central"/>
</dbReference>
<dbReference type="GO" id="GO:0008045">
    <property type="term" value="P:motor neuron axon guidance"/>
    <property type="evidence" value="ECO:0000318"/>
    <property type="project" value="GO_Central"/>
</dbReference>
<dbReference type="GO" id="GO:0007520">
    <property type="term" value="P:myoblast fusion"/>
    <property type="evidence" value="ECO:0000314"/>
    <property type="project" value="MGI"/>
</dbReference>
<dbReference type="GO" id="GO:0006355">
    <property type="term" value="P:regulation of DNA-templated transcription"/>
    <property type="evidence" value="ECO:0000314"/>
    <property type="project" value="MGI"/>
</dbReference>
<dbReference type="GO" id="GO:0009888">
    <property type="term" value="P:tissue development"/>
    <property type="evidence" value="ECO:0000318"/>
    <property type="project" value="GO_Central"/>
</dbReference>
<dbReference type="CDD" id="cd00055">
    <property type="entry name" value="EGF_Lam"/>
    <property type="match status" value="3"/>
</dbReference>
<dbReference type="CDD" id="cd03579">
    <property type="entry name" value="NTR_netrin-1_like"/>
    <property type="match status" value="1"/>
</dbReference>
<dbReference type="FunFam" id="2.10.25.10:FF:000081">
    <property type="entry name" value="Netrin 1"/>
    <property type="match status" value="1"/>
</dbReference>
<dbReference type="FunFam" id="2.40.50.120:FF:000001">
    <property type="entry name" value="Netrin 1"/>
    <property type="match status" value="1"/>
</dbReference>
<dbReference type="FunFam" id="2.60.120.260:FF:000015">
    <property type="entry name" value="Netrin 1"/>
    <property type="match status" value="1"/>
</dbReference>
<dbReference type="FunFam" id="2.10.25.10:FF:000048">
    <property type="entry name" value="Netrin 3"/>
    <property type="match status" value="1"/>
</dbReference>
<dbReference type="Gene3D" id="2.40.50.120">
    <property type="match status" value="1"/>
</dbReference>
<dbReference type="Gene3D" id="2.60.120.260">
    <property type="entry name" value="Galactose-binding domain-like"/>
    <property type="match status" value="1"/>
</dbReference>
<dbReference type="Gene3D" id="2.10.25.10">
    <property type="entry name" value="Laminin"/>
    <property type="match status" value="2"/>
</dbReference>
<dbReference type="InterPro" id="IPR050440">
    <property type="entry name" value="Laminin/Netrin_ECM"/>
</dbReference>
<dbReference type="InterPro" id="IPR008211">
    <property type="entry name" value="Laminin_N"/>
</dbReference>
<dbReference type="InterPro" id="IPR002049">
    <property type="entry name" value="LE_dom"/>
</dbReference>
<dbReference type="InterPro" id="IPR056863">
    <property type="entry name" value="LMN_ATRN_NET-like_EGF"/>
</dbReference>
<dbReference type="InterPro" id="IPR001134">
    <property type="entry name" value="Netrin_domain"/>
</dbReference>
<dbReference type="InterPro" id="IPR018933">
    <property type="entry name" value="Netrin_module_non-TIMP"/>
</dbReference>
<dbReference type="InterPro" id="IPR008993">
    <property type="entry name" value="TIMP-like_OB-fold"/>
</dbReference>
<dbReference type="PANTHER" id="PTHR10574:SF292">
    <property type="entry name" value="NETRIN-3"/>
    <property type="match status" value="1"/>
</dbReference>
<dbReference type="PANTHER" id="PTHR10574">
    <property type="entry name" value="NETRIN/LAMININ-RELATED"/>
    <property type="match status" value="1"/>
</dbReference>
<dbReference type="Pfam" id="PF00053">
    <property type="entry name" value="EGF_laminin"/>
    <property type="match status" value="2"/>
</dbReference>
<dbReference type="Pfam" id="PF24973">
    <property type="entry name" value="EGF_LMN_ATRN"/>
    <property type="match status" value="1"/>
</dbReference>
<dbReference type="Pfam" id="PF00055">
    <property type="entry name" value="Laminin_N"/>
    <property type="match status" value="1"/>
</dbReference>
<dbReference type="Pfam" id="PF01759">
    <property type="entry name" value="NTR"/>
    <property type="match status" value="1"/>
</dbReference>
<dbReference type="SMART" id="SM00643">
    <property type="entry name" value="C345C"/>
    <property type="match status" value="1"/>
</dbReference>
<dbReference type="SMART" id="SM00180">
    <property type="entry name" value="EGF_Lam"/>
    <property type="match status" value="3"/>
</dbReference>
<dbReference type="SMART" id="SM00136">
    <property type="entry name" value="LamNT"/>
    <property type="match status" value="1"/>
</dbReference>
<dbReference type="SUPFAM" id="SSF57196">
    <property type="entry name" value="EGF/Laminin"/>
    <property type="match status" value="3"/>
</dbReference>
<dbReference type="SUPFAM" id="SSF50242">
    <property type="entry name" value="TIMP-like"/>
    <property type="match status" value="1"/>
</dbReference>
<dbReference type="PROSITE" id="PS00022">
    <property type="entry name" value="EGF_1"/>
    <property type="match status" value="2"/>
</dbReference>
<dbReference type="PROSITE" id="PS01248">
    <property type="entry name" value="EGF_LAM_1"/>
    <property type="match status" value="3"/>
</dbReference>
<dbReference type="PROSITE" id="PS50027">
    <property type="entry name" value="EGF_LAM_2"/>
    <property type="match status" value="3"/>
</dbReference>
<dbReference type="PROSITE" id="PS51117">
    <property type="entry name" value="LAMININ_NTER"/>
    <property type="match status" value="1"/>
</dbReference>
<dbReference type="PROSITE" id="PS50189">
    <property type="entry name" value="NTR"/>
    <property type="match status" value="1"/>
</dbReference>
<organism>
    <name type="scientific">Gallus gallus</name>
    <name type="common">Chicken</name>
    <dbReference type="NCBI Taxonomy" id="9031"/>
    <lineage>
        <taxon>Eukaryota</taxon>
        <taxon>Metazoa</taxon>
        <taxon>Chordata</taxon>
        <taxon>Craniata</taxon>
        <taxon>Vertebrata</taxon>
        <taxon>Euteleostomi</taxon>
        <taxon>Archelosauria</taxon>
        <taxon>Archosauria</taxon>
        <taxon>Dinosauria</taxon>
        <taxon>Saurischia</taxon>
        <taxon>Theropoda</taxon>
        <taxon>Coelurosauria</taxon>
        <taxon>Aves</taxon>
        <taxon>Neognathae</taxon>
        <taxon>Galloanserae</taxon>
        <taxon>Galliformes</taxon>
        <taxon>Phasianidae</taxon>
        <taxon>Phasianinae</taxon>
        <taxon>Gallus</taxon>
    </lineage>
</organism>
<gene>
    <name type="primary">NTN3</name>
    <name type="synonym">NTN2</name>
</gene>